<proteinExistence type="predicted"/>
<dbReference type="EMBL" id="D84432">
    <property type="protein sequence ID" value="BAA12553.1"/>
    <property type="molecule type" value="Genomic_DNA"/>
</dbReference>
<dbReference type="EMBL" id="AL009126">
    <property type="protein sequence ID" value="CAB14381.1"/>
    <property type="molecule type" value="Genomic_DNA"/>
</dbReference>
<dbReference type="PIR" id="G69959">
    <property type="entry name" value="G69959"/>
</dbReference>
<dbReference type="RefSeq" id="NP_390330.1">
    <property type="nucleotide sequence ID" value="NC_000964.3"/>
</dbReference>
<dbReference type="RefSeq" id="WP_003226367.1">
    <property type="nucleotide sequence ID" value="NZ_OZ025638.1"/>
</dbReference>
<dbReference type="SMR" id="P54514"/>
<dbReference type="FunCoup" id="P54514">
    <property type="interactions" value="12"/>
</dbReference>
<dbReference type="STRING" id="224308.BSU24500"/>
<dbReference type="PaxDb" id="224308-BSU24500"/>
<dbReference type="DNASU" id="938552"/>
<dbReference type="EnsemblBacteria" id="CAB14381">
    <property type="protein sequence ID" value="CAB14381"/>
    <property type="gene ID" value="BSU_24500"/>
</dbReference>
<dbReference type="GeneID" id="938552"/>
<dbReference type="KEGG" id="bsu:BSU24500"/>
<dbReference type="PATRIC" id="fig|224308.179.peg.2668"/>
<dbReference type="eggNOG" id="ENOG5033M6N">
    <property type="taxonomic scope" value="Bacteria"/>
</dbReference>
<dbReference type="InParanoid" id="P54514"/>
<dbReference type="OrthoDB" id="2989424at2"/>
<dbReference type="BioCyc" id="BSUB:BSU24500-MONOMER"/>
<dbReference type="Proteomes" id="UP000001570">
    <property type="component" value="Chromosome"/>
</dbReference>
<dbReference type="GO" id="GO:0005886">
    <property type="term" value="C:plasma membrane"/>
    <property type="evidence" value="ECO:0007669"/>
    <property type="project" value="UniProtKB-SubCell"/>
</dbReference>
<dbReference type="InterPro" id="IPR048110">
    <property type="entry name" value="SA1362/YqhP-like"/>
</dbReference>
<dbReference type="NCBIfam" id="NF041554">
    <property type="entry name" value="SA1362_fam"/>
    <property type="match status" value="1"/>
</dbReference>
<gene>
    <name type="primary">yqhP</name>
    <name type="ordered locus">BSU24500</name>
</gene>
<name>YQHP_BACSU</name>
<comment type="subcellular location">
    <subcellularLocation>
        <location evidence="3">Cell membrane</location>
        <topology evidence="3">Multi-pass membrane protein</topology>
    </subcellularLocation>
</comment>
<accession>P54514</accession>
<protein>
    <recommendedName>
        <fullName>Uncharacterized protein YqhP</fullName>
    </recommendedName>
</protein>
<keyword id="KW-1003">Cell membrane</keyword>
<keyword id="KW-0472">Membrane</keyword>
<keyword id="KW-1185">Reference proteome</keyword>
<keyword id="KW-0812">Transmembrane</keyword>
<keyword id="KW-1133">Transmembrane helix</keyword>
<evidence type="ECO:0000255" key="1"/>
<evidence type="ECO:0000256" key="2">
    <source>
        <dbReference type="SAM" id="MobiDB-lite"/>
    </source>
</evidence>
<evidence type="ECO:0000305" key="3"/>
<sequence length="131" mass="14568">MNHRVQPIIAVLIALGAFGFLYVLVTNPGEMAKMAVTVIVAGIIIYFIVKYVMNRNAGSEGAAFKKAAKQSRRRMKEQKAKHRAGHKGRVSHLRSVPSASKPKPMILKKKSQTQLTVIEGKKNKKKNRALF</sequence>
<organism>
    <name type="scientific">Bacillus subtilis (strain 168)</name>
    <dbReference type="NCBI Taxonomy" id="224308"/>
    <lineage>
        <taxon>Bacteria</taxon>
        <taxon>Bacillati</taxon>
        <taxon>Bacillota</taxon>
        <taxon>Bacilli</taxon>
        <taxon>Bacillales</taxon>
        <taxon>Bacillaceae</taxon>
        <taxon>Bacillus</taxon>
    </lineage>
</organism>
<reference key="1">
    <citation type="journal article" date="1996" name="Microbiology">
        <title>Systematic sequencing of the 283 kb 210 degrees-232 degrees region of the Bacillus subtilis genome containing the skin element and many sporulation genes.</title>
        <authorList>
            <person name="Mizuno M."/>
            <person name="Masuda S."/>
            <person name="Takemaru K."/>
            <person name="Hosono S."/>
            <person name="Sato T."/>
            <person name="Takeuchi M."/>
            <person name="Kobayashi Y."/>
        </authorList>
    </citation>
    <scope>NUCLEOTIDE SEQUENCE [GENOMIC DNA]</scope>
    <source>
        <strain>168 / JH642</strain>
    </source>
</reference>
<reference key="2">
    <citation type="journal article" date="1997" name="Nature">
        <title>The complete genome sequence of the Gram-positive bacterium Bacillus subtilis.</title>
        <authorList>
            <person name="Kunst F."/>
            <person name="Ogasawara N."/>
            <person name="Moszer I."/>
            <person name="Albertini A.M."/>
            <person name="Alloni G."/>
            <person name="Azevedo V."/>
            <person name="Bertero M.G."/>
            <person name="Bessieres P."/>
            <person name="Bolotin A."/>
            <person name="Borchert S."/>
            <person name="Borriss R."/>
            <person name="Boursier L."/>
            <person name="Brans A."/>
            <person name="Braun M."/>
            <person name="Brignell S.C."/>
            <person name="Bron S."/>
            <person name="Brouillet S."/>
            <person name="Bruschi C.V."/>
            <person name="Caldwell B."/>
            <person name="Capuano V."/>
            <person name="Carter N.M."/>
            <person name="Choi S.-K."/>
            <person name="Codani J.-J."/>
            <person name="Connerton I.F."/>
            <person name="Cummings N.J."/>
            <person name="Daniel R.A."/>
            <person name="Denizot F."/>
            <person name="Devine K.M."/>
            <person name="Duesterhoeft A."/>
            <person name="Ehrlich S.D."/>
            <person name="Emmerson P.T."/>
            <person name="Entian K.-D."/>
            <person name="Errington J."/>
            <person name="Fabret C."/>
            <person name="Ferrari E."/>
            <person name="Foulger D."/>
            <person name="Fritz C."/>
            <person name="Fujita M."/>
            <person name="Fujita Y."/>
            <person name="Fuma S."/>
            <person name="Galizzi A."/>
            <person name="Galleron N."/>
            <person name="Ghim S.-Y."/>
            <person name="Glaser P."/>
            <person name="Goffeau A."/>
            <person name="Golightly E.J."/>
            <person name="Grandi G."/>
            <person name="Guiseppi G."/>
            <person name="Guy B.J."/>
            <person name="Haga K."/>
            <person name="Haiech J."/>
            <person name="Harwood C.R."/>
            <person name="Henaut A."/>
            <person name="Hilbert H."/>
            <person name="Holsappel S."/>
            <person name="Hosono S."/>
            <person name="Hullo M.-F."/>
            <person name="Itaya M."/>
            <person name="Jones L.-M."/>
            <person name="Joris B."/>
            <person name="Karamata D."/>
            <person name="Kasahara Y."/>
            <person name="Klaerr-Blanchard M."/>
            <person name="Klein C."/>
            <person name="Kobayashi Y."/>
            <person name="Koetter P."/>
            <person name="Koningstein G."/>
            <person name="Krogh S."/>
            <person name="Kumano M."/>
            <person name="Kurita K."/>
            <person name="Lapidus A."/>
            <person name="Lardinois S."/>
            <person name="Lauber J."/>
            <person name="Lazarevic V."/>
            <person name="Lee S.-M."/>
            <person name="Levine A."/>
            <person name="Liu H."/>
            <person name="Masuda S."/>
            <person name="Mauel C."/>
            <person name="Medigue C."/>
            <person name="Medina N."/>
            <person name="Mellado R.P."/>
            <person name="Mizuno M."/>
            <person name="Moestl D."/>
            <person name="Nakai S."/>
            <person name="Noback M."/>
            <person name="Noone D."/>
            <person name="O'Reilly M."/>
            <person name="Ogawa K."/>
            <person name="Ogiwara A."/>
            <person name="Oudega B."/>
            <person name="Park S.-H."/>
            <person name="Parro V."/>
            <person name="Pohl T.M."/>
            <person name="Portetelle D."/>
            <person name="Porwollik S."/>
            <person name="Prescott A.M."/>
            <person name="Presecan E."/>
            <person name="Pujic P."/>
            <person name="Purnelle B."/>
            <person name="Rapoport G."/>
            <person name="Rey M."/>
            <person name="Reynolds S."/>
            <person name="Rieger M."/>
            <person name="Rivolta C."/>
            <person name="Rocha E."/>
            <person name="Roche B."/>
            <person name="Rose M."/>
            <person name="Sadaie Y."/>
            <person name="Sato T."/>
            <person name="Scanlan E."/>
            <person name="Schleich S."/>
            <person name="Schroeter R."/>
            <person name="Scoffone F."/>
            <person name="Sekiguchi J."/>
            <person name="Sekowska A."/>
            <person name="Seror S.J."/>
            <person name="Serror P."/>
            <person name="Shin B.-S."/>
            <person name="Soldo B."/>
            <person name="Sorokin A."/>
            <person name="Tacconi E."/>
            <person name="Takagi T."/>
            <person name="Takahashi H."/>
            <person name="Takemaru K."/>
            <person name="Takeuchi M."/>
            <person name="Tamakoshi A."/>
            <person name="Tanaka T."/>
            <person name="Terpstra P."/>
            <person name="Tognoni A."/>
            <person name="Tosato V."/>
            <person name="Uchiyama S."/>
            <person name="Vandenbol M."/>
            <person name="Vannier F."/>
            <person name="Vassarotti A."/>
            <person name="Viari A."/>
            <person name="Wambutt R."/>
            <person name="Wedler E."/>
            <person name="Wedler H."/>
            <person name="Weitzenegger T."/>
            <person name="Winters P."/>
            <person name="Wipat A."/>
            <person name="Yamamoto H."/>
            <person name="Yamane K."/>
            <person name="Yasumoto K."/>
            <person name="Yata K."/>
            <person name="Yoshida K."/>
            <person name="Yoshikawa H.-F."/>
            <person name="Zumstein E."/>
            <person name="Yoshikawa H."/>
            <person name="Danchin A."/>
        </authorList>
    </citation>
    <scope>NUCLEOTIDE SEQUENCE [LARGE SCALE GENOMIC DNA]</scope>
    <source>
        <strain>168</strain>
    </source>
</reference>
<feature type="chain" id="PRO_0000049822" description="Uncharacterized protein YqhP">
    <location>
        <begin position="1"/>
        <end position="131"/>
    </location>
</feature>
<feature type="transmembrane region" description="Helical" evidence="1">
    <location>
        <begin position="5"/>
        <end position="25"/>
    </location>
</feature>
<feature type="transmembrane region" description="Helical" evidence="1">
    <location>
        <begin position="34"/>
        <end position="54"/>
    </location>
</feature>
<feature type="region of interest" description="Disordered" evidence="2">
    <location>
        <begin position="62"/>
        <end position="131"/>
    </location>
</feature>
<feature type="compositionally biased region" description="Basic residues" evidence="2">
    <location>
        <begin position="66"/>
        <end position="92"/>
    </location>
</feature>
<feature type="compositionally biased region" description="Basic residues" evidence="2">
    <location>
        <begin position="122"/>
        <end position="131"/>
    </location>
</feature>